<name>SQRD_ACIAM</name>
<organism evidence="5">
    <name type="scientific">Acidianus ambivalens</name>
    <name type="common">Desulfurolobus ambivalens</name>
    <dbReference type="NCBI Taxonomy" id="2283"/>
    <lineage>
        <taxon>Archaea</taxon>
        <taxon>Thermoproteota</taxon>
        <taxon>Thermoprotei</taxon>
        <taxon>Sulfolobales</taxon>
        <taxon>Sulfolobaceae</taxon>
        <taxon>Acidianus</taxon>
    </lineage>
</organism>
<proteinExistence type="evidence at protein level"/>
<evidence type="ECO:0000269" key="1">
    <source>
    </source>
</evidence>
<evidence type="ECO:0000303" key="2">
    <source>
    </source>
</evidence>
<evidence type="ECO:0000303" key="3">
    <source>
    </source>
</evidence>
<evidence type="ECO:0000305" key="4"/>
<evidence type="ECO:0000312" key="5">
    <source>
        <dbReference type="EMBL" id="CAD33806.1"/>
    </source>
</evidence>
<evidence type="ECO:0007829" key="6">
    <source>
        <dbReference type="PDB" id="3H8L"/>
    </source>
</evidence>
<gene>
    <name evidence="4" type="primary">sqr</name>
    <name evidence="2" type="synonym">noxA</name>
</gene>
<keyword id="KW-0002">3D-structure</keyword>
<keyword id="KW-0274">FAD</keyword>
<keyword id="KW-0285">Flavoprotein</keyword>
<keyword id="KW-0472">Membrane</keyword>
<keyword id="KW-0547">Nucleotide-binding</keyword>
<keyword id="KW-0560">Oxidoreductase</keyword>
<keyword id="KW-0874">Quinone</keyword>
<reference evidence="5" key="1">
    <citation type="journal article" date="2002" name="FEBS Lett.">
        <title>Acidianus ambivalens type-II NADH dehydrogenase: genetic characterisation and identification of the flavin moiety as FMN.</title>
        <authorList>
            <person name="Bandeiras T.M."/>
            <person name="Salgueiro C."/>
            <person name="Kletzin A."/>
            <person name="Gomes C.M."/>
            <person name="Teixeira M."/>
        </authorList>
    </citation>
    <scope>NUCLEOTIDE SEQUENCE [GENOMIC DNA]</scope>
    <source>
        <strain evidence="5">Lei 10 / DSM 3772 / JCM 9191</strain>
    </source>
</reference>
<reference key="2">
    <citation type="journal article" date="2009" name="Biochemistry">
        <title>Structural and functional insights into sulfide:quinone oxidoreductase.</title>
        <authorList>
            <person name="Brito J.A."/>
            <person name="Sousa F.L."/>
            <person name="Stelter M."/>
            <person name="Bandeiras T.M."/>
            <person name="Vonrhein C."/>
            <person name="Teixeira M."/>
            <person name="Pereira M.M."/>
            <person name="Archer M."/>
        </authorList>
    </citation>
    <scope>X-RAY CRYSTALLOGRAPHY (2.57 ANGSTROMS) IN COMPLEX WITH FAD</scope>
    <scope>FUNCTION</scope>
    <scope>CATALYTIC ACTIVITY</scope>
    <scope>ACTIVE SITE</scope>
    <scope>ACTIVITY REGULATION</scope>
    <scope>COFACTOR</scope>
    <scope>DISULFIDE BOND</scope>
    <scope>SUBCELLULAR LOCATION</scope>
    <scope>SUBUNIT</scope>
    <scope>BIOPHYSICOCHEMICAL PROPERTIES</scope>
</reference>
<accession>Q7ZAG8</accession>
<sequence length="409" mass="45152">MTKVLVLGGRFGALTAAYTLKRLVGSKADVKVINKSRFSYFRPALPHVAIGVRDVDELKVDLSEALPEKGIQFQEGTVEKIDAKSSMVYYTKPDGSMAEEEYDYVIVGIGAHLATELVKGWDKYGYSVCEPEFATKLREKLESFQGGNIAIGSGPFYQGHNPKPKVPENFVPNADSACEGPVFEMSLMLHGYFKKKGMLDKVHVTVFSPGEYLSDLSPNSRKAVASIYNQLGIKLVHNFKIKEIREHEIVDEKGNTIPADITILLPPYTGNPALKNSTPDLVDDGGFIPTDLNMVSIKYDNVYAVGDANSMTVPKLGYLAVMTGRIAAQHLANRLGVPTKVDKYYPTIMCVADNPYEGYAVSVKDDTWYGGTVSIADPAAVNHLKKELFTKYYMWTKGDMALEKFLASW</sequence>
<comment type="function">
    <text evidence="1">Catalyzes the oxidation of sulfides, such as hydrogen sulfide, with the help of a quinone. Has the highest activity with caldariella quinone and decylubiquinone, and lower activity with naphtoquinones. Consecutive reaction cycles lead to the accumulation of a polysulfide product on the active site Cys residues; these products are released when they exceed a critical length, typically as cyclooctasulfur.</text>
</comment>
<comment type="catalytic activity">
    <reaction evidence="1">
        <text>n a quinone + n hydrogen sulfide + n H(+) = polysulfur(n-2) + n a quinol</text>
        <dbReference type="Rhea" id="RHEA:30239"/>
        <dbReference type="Rhea" id="RHEA-COMP:19475"/>
        <dbReference type="ChEBI" id="CHEBI:15378"/>
        <dbReference type="ChEBI" id="CHEBI:17909"/>
        <dbReference type="ChEBI" id="CHEBI:24646"/>
        <dbReference type="ChEBI" id="CHEBI:29919"/>
        <dbReference type="ChEBI" id="CHEBI:132124"/>
        <dbReference type="EC" id="1.8.5.4"/>
    </reaction>
</comment>
<comment type="cofactor">
    <cofactor evidence="1">
        <name>FAD</name>
        <dbReference type="ChEBI" id="CHEBI:57692"/>
    </cofactor>
    <text evidence="1">Binds 1 FAD per subunit.</text>
</comment>
<comment type="activity regulation">
    <text evidence="1">Inhibited by the quinone analog 2-heptyl-4-hydroxyquinolone N-oxide (HQNO). Inactivated by iodoacetamide treatment. Inhibited by KCN.</text>
</comment>
<comment type="biophysicochemical properties">
    <phDependence>
        <text evidence="1">Optimum pH is about 6.</text>
    </phDependence>
    <temperatureDependence>
        <text evidence="1">Optimum temperature is above 70 degrees Celsius.</text>
    </temperatureDependence>
</comment>
<comment type="subunit">
    <text evidence="1">Monomer.</text>
</comment>
<comment type="subcellular location">
    <subcellularLocation>
        <location evidence="3">Membrane</location>
        <topology evidence="3">Peripheral membrane protein</topology>
    </subcellularLocation>
</comment>
<comment type="similarity">
    <text evidence="4">Belongs to the SQRD family.</text>
</comment>
<comment type="caution">
    <text evidence="1 4">Was originally identified as FMN-containing NADH dehydrogenase (PubMed:12417325), based on the NADH oxidase activity of the C-terminally truncated protein. Was then shown to function as sulfide:quinone reductase. The full-length protein does not have NADH oxidase activity (PubMed:19438211).</text>
</comment>
<dbReference type="EC" id="1.8.5.4" evidence="1"/>
<dbReference type="EMBL" id="AJ489504">
    <property type="protein sequence ID" value="CAD33806.1"/>
    <property type="molecule type" value="Genomic_DNA"/>
</dbReference>
<dbReference type="RefSeq" id="WP_152939632.1">
    <property type="nucleotide sequence ID" value="NZ_CP045482.1"/>
</dbReference>
<dbReference type="PDB" id="3H8I">
    <property type="method" value="X-ray"/>
    <property type="resolution" value="2.65 A"/>
    <property type="chains" value="A/B=1-409"/>
</dbReference>
<dbReference type="PDB" id="3H8L">
    <property type="method" value="X-ray"/>
    <property type="resolution" value="2.57 A"/>
    <property type="chains" value="A/B=1-409"/>
</dbReference>
<dbReference type="PDBsum" id="3H8I"/>
<dbReference type="PDBsum" id="3H8L"/>
<dbReference type="SMR" id="Q7ZAG8"/>
<dbReference type="GeneID" id="42780117"/>
<dbReference type="EvolutionaryTrace" id="Q7ZAG8"/>
<dbReference type="GO" id="GO:0016020">
    <property type="term" value="C:membrane"/>
    <property type="evidence" value="ECO:0007669"/>
    <property type="project" value="UniProtKB-SubCell"/>
</dbReference>
<dbReference type="GO" id="GO:0000166">
    <property type="term" value="F:nucleotide binding"/>
    <property type="evidence" value="ECO:0007669"/>
    <property type="project" value="UniProtKB-KW"/>
</dbReference>
<dbReference type="GO" id="GO:0048038">
    <property type="term" value="F:quinone binding"/>
    <property type="evidence" value="ECO:0007669"/>
    <property type="project" value="UniProtKB-KW"/>
</dbReference>
<dbReference type="GO" id="GO:0070224">
    <property type="term" value="F:sulfide:quinone oxidoreductase activity"/>
    <property type="evidence" value="ECO:0007669"/>
    <property type="project" value="UniProtKB-EC"/>
</dbReference>
<dbReference type="Gene3D" id="3.50.50.60">
    <property type="entry name" value="FAD/NAD(P)-binding domain"/>
    <property type="match status" value="2"/>
</dbReference>
<dbReference type="InterPro" id="IPR036188">
    <property type="entry name" value="FAD/NAD-bd_sf"/>
</dbReference>
<dbReference type="InterPro" id="IPR023753">
    <property type="entry name" value="FAD/NAD-binding_dom"/>
</dbReference>
<dbReference type="InterPro" id="IPR052541">
    <property type="entry name" value="SQRD"/>
</dbReference>
<dbReference type="PANTHER" id="PTHR43755">
    <property type="match status" value="1"/>
</dbReference>
<dbReference type="PANTHER" id="PTHR43755:SF1">
    <property type="entry name" value="FAD-DEPENDENT PYRIDINE NUCLEOTIDE-DISULPHIDE OXIDOREDUCTASE"/>
    <property type="match status" value="1"/>
</dbReference>
<dbReference type="Pfam" id="PF07992">
    <property type="entry name" value="Pyr_redox_2"/>
    <property type="match status" value="2"/>
</dbReference>
<dbReference type="SUPFAM" id="SSF51905">
    <property type="entry name" value="FAD/NAD(P)-binding domain"/>
    <property type="match status" value="2"/>
</dbReference>
<feature type="chain" id="PRO_0000430826" description="Sulfide-quinone reductase">
    <location>
        <begin position="1"/>
        <end position="409"/>
    </location>
</feature>
<feature type="active site" description="Cysteine persulfide intermediate" evidence="1">
    <location>
        <position position="178"/>
    </location>
</feature>
<feature type="active site" description="Cysteine persulfide intermediate" evidence="1">
    <location>
        <position position="350"/>
    </location>
</feature>
<feature type="binding site" evidence="1">
    <location>
        <begin position="8"/>
        <end position="12"/>
    </location>
    <ligand>
        <name>FAD</name>
        <dbReference type="ChEBI" id="CHEBI:57692"/>
    </ligand>
</feature>
<feature type="binding site" evidence="1">
    <location>
        <begin position="34"/>
        <end position="35"/>
    </location>
    <ligand>
        <name>FAD</name>
        <dbReference type="ChEBI" id="CHEBI:57692"/>
    </ligand>
</feature>
<feature type="binding site" evidence="1">
    <location>
        <position position="129"/>
    </location>
    <ligand>
        <name>FAD</name>
        <dbReference type="ChEBI" id="CHEBI:57692"/>
    </ligand>
</feature>
<feature type="binding site" evidence="1">
    <location>
        <position position="271"/>
    </location>
    <ligand>
        <name>FAD</name>
        <dbReference type="ChEBI" id="CHEBI:57692"/>
    </ligand>
</feature>
<feature type="binding site" evidence="1">
    <location>
        <position position="307"/>
    </location>
    <ligand>
        <name>FAD</name>
        <dbReference type="ChEBI" id="CHEBI:57692"/>
    </ligand>
</feature>
<feature type="binding site" evidence="1">
    <location>
        <position position="317"/>
    </location>
    <ligand>
        <name>FAD</name>
        <dbReference type="ChEBI" id="CHEBI:57692"/>
    </ligand>
</feature>
<feature type="strand" evidence="6">
    <location>
        <begin position="3"/>
        <end position="7"/>
    </location>
</feature>
<feature type="helix" evidence="6">
    <location>
        <begin position="11"/>
        <end position="24"/>
    </location>
</feature>
<feature type="helix" evidence="6">
    <location>
        <begin position="25"/>
        <end position="27"/>
    </location>
</feature>
<feature type="strand" evidence="6">
    <location>
        <begin position="28"/>
        <end position="41"/>
    </location>
</feature>
<feature type="strand" evidence="6">
    <location>
        <begin position="58"/>
        <end position="61"/>
    </location>
</feature>
<feature type="helix" evidence="6">
    <location>
        <begin position="62"/>
        <end position="65"/>
    </location>
</feature>
<feature type="helix" evidence="6">
    <location>
        <begin position="67"/>
        <end position="69"/>
    </location>
</feature>
<feature type="strand" evidence="6">
    <location>
        <begin position="72"/>
        <end position="75"/>
    </location>
</feature>
<feature type="strand" evidence="6">
    <location>
        <begin position="77"/>
        <end position="82"/>
    </location>
</feature>
<feature type="turn" evidence="6">
    <location>
        <begin position="83"/>
        <end position="86"/>
    </location>
</feature>
<feature type="strand" evidence="6">
    <location>
        <begin position="87"/>
        <end position="91"/>
    </location>
</feature>
<feature type="strand" evidence="6">
    <location>
        <begin position="97"/>
        <end position="101"/>
    </location>
</feature>
<feature type="strand" evidence="6">
    <location>
        <begin position="103"/>
        <end position="107"/>
    </location>
</feature>
<feature type="helix" evidence="6">
    <location>
        <begin position="115"/>
        <end position="117"/>
    </location>
</feature>
<feature type="helix" evidence="6">
    <location>
        <begin position="121"/>
        <end position="124"/>
    </location>
</feature>
<feature type="strand" evidence="6">
    <location>
        <begin position="126"/>
        <end position="130"/>
    </location>
</feature>
<feature type="helix" evidence="6">
    <location>
        <begin position="133"/>
        <end position="143"/>
    </location>
</feature>
<feature type="strand" evidence="6">
    <location>
        <begin position="146"/>
        <end position="153"/>
    </location>
</feature>
<feature type="helix" evidence="6">
    <location>
        <begin position="180"/>
        <end position="194"/>
    </location>
</feature>
<feature type="turn" evidence="6">
    <location>
        <begin position="195"/>
        <end position="197"/>
    </location>
</feature>
<feature type="turn" evidence="6">
    <location>
        <begin position="199"/>
        <end position="201"/>
    </location>
</feature>
<feature type="strand" evidence="6">
    <location>
        <begin position="202"/>
        <end position="207"/>
    </location>
</feature>
<feature type="strand" evidence="6">
    <location>
        <begin position="209"/>
        <end position="213"/>
    </location>
</feature>
<feature type="helix" evidence="6">
    <location>
        <begin position="218"/>
        <end position="231"/>
    </location>
</feature>
<feature type="strand" evidence="6">
    <location>
        <begin position="234"/>
        <end position="236"/>
    </location>
</feature>
<feature type="strand" evidence="6">
    <location>
        <begin position="241"/>
        <end position="244"/>
    </location>
</feature>
<feature type="strand" evidence="6">
    <location>
        <begin position="246"/>
        <end position="251"/>
    </location>
</feature>
<feature type="strand" evidence="6">
    <location>
        <begin position="256"/>
        <end position="258"/>
    </location>
</feature>
<feature type="strand" evidence="6">
    <location>
        <begin position="260"/>
        <end position="265"/>
    </location>
</feature>
<feature type="helix" evidence="6">
    <location>
        <begin position="272"/>
        <end position="275"/>
    </location>
</feature>
<feature type="helix" evidence="6">
    <location>
        <begin position="279"/>
        <end position="281"/>
    </location>
</feature>
<feature type="strand" evidence="6">
    <location>
        <begin position="294"/>
        <end position="298"/>
    </location>
</feature>
<feature type="strand" evidence="6">
    <location>
        <begin position="302"/>
        <end position="304"/>
    </location>
</feature>
<feature type="helix" evidence="6">
    <location>
        <begin position="306"/>
        <end position="308"/>
    </location>
</feature>
<feature type="helix" evidence="6">
    <location>
        <begin position="317"/>
        <end position="334"/>
    </location>
</feature>
<feature type="helix" evidence="6">
    <location>
        <begin position="351"/>
        <end position="353"/>
    </location>
</feature>
<protein>
    <recommendedName>
        <fullName evidence="4">Sulfide-quinone reductase</fullName>
        <shortName>SQR</shortName>
        <ecNumber evidence="1">1.8.5.4</ecNumber>
    </recommendedName>
    <alternativeName>
        <fullName evidence="3">Sulfide:quinone oxidoreductase</fullName>
    </alternativeName>
</protein>